<name>GATF_CANAL</name>
<protein>
    <recommendedName>
        <fullName evidence="1">Glutamyl-tRNA(Gln) amidotransferase subunit F, mitochondrial</fullName>
        <shortName evidence="1">Glu-AdT subunit F</shortName>
        <ecNumber evidence="1">6.3.5.-</ecNumber>
    </recommendedName>
</protein>
<accession>Q59X39</accession>
<accession>A0A1D8PIC0</accession>
<proteinExistence type="inferred from homology"/>
<keyword id="KW-0067">ATP-binding</keyword>
<keyword id="KW-0436">Ligase</keyword>
<keyword id="KW-0472">Membrane</keyword>
<keyword id="KW-0496">Mitochondrion</keyword>
<keyword id="KW-0999">Mitochondrion inner membrane</keyword>
<keyword id="KW-0547">Nucleotide-binding</keyword>
<keyword id="KW-0648">Protein biosynthesis</keyword>
<keyword id="KW-1185">Reference proteome</keyword>
<keyword id="KW-0809">Transit peptide</keyword>
<feature type="transit peptide" description="Mitochondrion" evidence="1">
    <location>
        <begin position="1"/>
        <end position="19"/>
    </location>
</feature>
<feature type="chain" id="PRO_0000413396" description="Glutamyl-tRNA(Gln) amidotransferase subunit F, mitochondrial">
    <location>
        <begin position="20"/>
        <end position="165"/>
    </location>
</feature>
<gene>
    <name evidence="1" type="primary">GTF1</name>
    <name type="ordered locus">CAALFM_C209310CA</name>
    <name type="ORF">CaO19.11573</name>
    <name type="ORF">CaO19.4092</name>
</gene>
<organism>
    <name type="scientific">Candida albicans (strain SC5314 / ATCC MYA-2876)</name>
    <name type="common">Yeast</name>
    <dbReference type="NCBI Taxonomy" id="237561"/>
    <lineage>
        <taxon>Eukaryota</taxon>
        <taxon>Fungi</taxon>
        <taxon>Dikarya</taxon>
        <taxon>Ascomycota</taxon>
        <taxon>Saccharomycotina</taxon>
        <taxon>Pichiomycetes</taxon>
        <taxon>Debaryomycetaceae</taxon>
        <taxon>Candida/Lodderomyces clade</taxon>
        <taxon>Candida</taxon>
    </lineage>
</organism>
<sequence length="165" mass="18977">MKSILRSTTRNLITSSRRFENLKTTEEIRNFLAESTWSINELLKSPTGSSQPEVSPEIVKKMLKLSGLNDLKDDQSVTKALNLQMMFINHLYDNDHETVTPSPKRNENNGIFRLLASDHLPQRPLELNNLLKQINELKPDPSKGEVDFTISDLQRDSFVINKRKE</sequence>
<evidence type="ECO:0000255" key="1">
    <source>
        <dbReference type="HAMAP-Rule" id="MF_03151"/>
    </source>
</evidence>
<dbReference type="EC" id="6.3.5.-" evidence="1"/>
<dbReference type="EMBL" id="CP017624">
    <property type="protein sequence ID" value="AOW27914.1"/>
    <property type="molecule type" value="Genomic_DNA"/>
</dbReference>
<dbReference type="RefSeq" id="XP_714263.1">
    <property type="nucleotide sequence ID" value="XM_709170.1"/>
</dbReference>
<dbReference type="SMR" id="Q59X39"/>
<dbReference type="FunCoup" id="Q59X39">
    <property type="interactions" value="82"/>
</dbReference>
<dbReference type="STRING" id="237561.Q59X39"/>
<dbReference type="EnsemblFungi" id="C2_09310C_A-T">
    <property type="protein sequence ID" value="C2_09310C_A-T-p1"/>
    <property type="gene ID" value="C2_09310C_A"/>
</dbReference>
<dbReference type="GeneID" id="3644104"/>
<dbReference type="KEGG" id="cal:CAALFM_C209310CA"/>
<dbReference type="CGD" id="CAL0000201078">
    <property type="gene designation" value="orf19.11573"/>
</dbReference>
<dbReference type="VEuPathDB" id="FungiDB:C2_09310C_A"/>
<dbReference type="eggNOG" id="ENOG502RK44">
    <property type="taxonomic scope" value="Eukaryota"/>
</dbReference>
<dbReference type="HOGENOM" id="CLU_127195_0_0_1"/>
<dbReference type="InParanoid" id="Q59X39"/>
<dbReference type="OMA" id="STWSINE"/>
<dbReference type="OrthoDB" id="4024285at2759"/>
<dbReference type="PRO" id="PR:Q59X39"/>
<dbReference type="Proteomes" id="UP000000559">
    <property type="component" value="Chromosome 2"/>
</dbReference>
<dbReference type="GO" id="GO:0030956">
    <property type="term" value="C:glutamyl-tRNA(Gln) amidotransferase complex"/>
    <property type="evidence" value="ECO:0007669"/>
    <property type="project" value="UniProtKB-UniRule"/>
</dbReference>
<dbReference type="GO" id="GO:0005743">
    <property type="term" value="C:mitochondrial inner membrane"/>
    <property type="evidence" value="ECO:0007669"/>
    <property type="project" value="UniProtKB-SubCell"/>
</dbReference>
<dbReference type="GO" id="GO:0005524">
    <property type="term" value="F:ATP binding"/>
    <property type="evidence" value="ECO:0007669"/>
    <property type="project" value="UniProtKB-KW"/>
</dbReference>
<dbReference type="GO" id="GO:0050567">
    <property type="term" value="F:glutaminyl-tRNA synthase (glutamine-hydrolyzing) activity"/>
    <property type="evidence" value="ECO:0007669"/>
    <property type="project" value="UniProtKB-UniRule"/>
</dbReference>
<dbReference type="GO" id="GO:0070681">
    <property type="term" value="P:glutaminyl-tRNAGln biosynthesis via transamidation"/>
    <property type="evidence" value="ECO:0007669"/>
    <property type="project" value="UniProtKB-UniRule"/>
</dbReference>
<dbReference type="GO" id="GO:0032543">
    <property type="term" value="P:mitochondrial translation"/>
    <property type="evidence" value="ECO:0007669"/>
    <property type="project" value="UniProtKB-UniRule"/>
</dbReference>
<dbReference type="CDD" id="cd21422">
    <property type="entry name" value="GatF"/>
    <property type="match status" value="1"/>
</dbReference>
<dbReference type="HAMAP" id="MF_03151">
    <property type="entry name" value="GatF"/>
    <property type="match status" value="1"/>
</dbReference>
<dbReference type="InterPro" id="IPR027499">
    <property type="entry name" value="GatF"/>
</dbReference>
<dbReference type="Pfam" id="PF20977">
    <property type="entry name" value="GatF"/>
    <property type="match status" value="1"/>
</dbReference>
<comment type="function">
    <text evidence="1">Allows the formation of correctly charged Gln-tRNA(Gln) through the transamidation of misacylated Glu-tRNA(Gln) in the mitochondria. The reaction takes place in the presence of glutamine and ATP through an activated gamma-phospho-Glu-tRNA(Gln). Required for proper protein synthesis within the mitochondrion.</text>
</comment>
<comment type="catalytic activity">
    <reaction evidence="1">
        <text>L-glutamyl-tRNA(Gln) + L-glutamine + ATP + H2O = L-glutaminyl-tRNA(Gln) + L-glutamate + ADP + phosphate + H(+)</text>
        <dbReference type="Rhea" id="RHEA:17521"/>
        <dbReference type="Rhea" id="RHEA-COMP:9681"/>
        <dbReference type="Rhea" id="RHEA-COMP:9684"/>
        <dbReference type="ChEBI" id="CHEBI:15377"/>
        <dbReference type="ChEBI" id="CHEBI:15378"/>
        <dbReference type="ChEBI" id="CHEBI:29985"/>
        <dbReference type="ChEBI" id="CHEBI:30616"/>
        <dbReference type="ChEBI" id="CHEBI:43474"/>
        <dbReference type="ChEBI" id="CHEBI:58359"/>
        <dbReference type="ChEBI" id="CHEBI:78520"/>
        <dbReference type="ChEBI" id="CHEBI:78521"/>
        <dbReference type="ChEBI" id="CHEBI:456216"/>
    </reaction>
</comment>
<comment type="subunit">
    <text evidence="1">Subunit of the heterotrimeric GatFAB amidotransferase (AdT) complex, composed of A, B and F subunits.</text>
</comment>
<comment type="subcellular location">
    <subcellularLocation>
        <location evidence="1">Mitochondrion inner membrane</location>
        <topology evidence="1">Peripheral membrane protein</topology>
        <orientation evidence="1">Matrix side</orientation>
    </subcellularLocation>
</comment>
<comment type="similarity">
    <text evidence="1">Belongs to the GatF family.</text>
</comment>
<reference key="1">
    <citation type="journal article" date="2004" name="Proc. Natl. Acad. Sci. U.S.A.">
        <title>The diploid genome sequence of Candida albicans.</title>
        <authorList>
            <person name="Jones T."/>
            <person name="Federspiel N.A."/>
            <person name="Chibana H."/>
            <person name="Dungan J."/>
            <person name="Kalman S."/>
            <person name="Magee B.B."/>
            <person name="Newport G."/>
            <person name="Thorstenson Y.R."/>
            <person name="Agabian N."/>
            <person name="Magee P.T."/>
            <person name="Davis R.W."/>
            <person name="Scherer S."/>
        </authorList>
    </citation>
    <scope>NUCLEOTIDE SEQUENCE [LARGE SCALE GENOMIC DNA]</scope>
    <source>
        <strain>SC5314 / ATCC MYA-2876</strain>
    </source>
</reference>
<reference key="2">
    <citation type="journal article" date="2007" name="Genome Biol.">
        <title>Assembly of the Candida albicans genome into sixteen supercontigs aligned on the eight chromosomes.</title>
        <authorList>
            <person name="van het Hoog M."/>
            <person name="Rast T.J."/>
            <person name="Martchenko M."/>
            <person name="Grindle S."/>
            <person name="Dignard D."/>
            <person name="Hogues H."/>
            <person name="Cuomo C."/>
            <person name="Berriman M."/>
            <person name="Scherer S."/>
            <person name="Magee B.B."/>
            <person name="Whiteway M."/>
            <person name="Chibana H."/>
            <person name="Nantel A."/>
            <person name="Magee P.T."/>
        </authorList>
    </citation>
    <scope>GENOME REANNOTATION</scope>
    <source>
        <strain>SC5314 / ATCC MYA-2876</strain>
    </source>
</reference>
<reference key="3">
    <citation type="journal article" date="2013" name="Genome Biol.">
        <title>Assembly of a phased diploid Candida albicans genome facilitates allele-specific measurements and provides a simple model for repeat and indel structure.</title>
        <authorList>
            <person name="Muzzey D."/>
            <person name="Schwartz K."/>
            <person name="Weissman J.S."/>
            <person name="Sherlock G."/>
        </authorList>
    </citation>
    <scope>NUCLEOTIDE SEQUENCE [LARGE SCALE GENOMIC DNA]</scope>
    <scope>GENOME REANNOTATION</scope>
    <source>
        <strain>SC5314 / ATCC MYA-2876</strain>
    </source>
</reference>